<sequence>MANTIEIRKGESGWGGPLSINVTAGKKIVYITAGTKPAIVDHLVALTGWEAVDGFKQGEPPAEEIGVAVIDCGGTLRCGLYPKRRIPTINIHATGKSGPLAQFITEDIYVSGVRVADIRVANDAEAAPPEVAVADVAVNAGKGTGRDYDTSKKITEQSDGLLAKVGMGMGSAVAILFQSGRETIDTVLKTILPFMAFVSALIGIIMASGLGDFIAHGLTPLANSPVGLVTLALICSFPLLSPFLGPGAVIAQVIGVLVGVQIGQGTIPPHLALPALFAINAQAACDFIPVGLSLANARQETVRVGVPAVLVGRFITGAPTVLLAWAASSFIYH</sequence>
<proteinExistence type="evidence at transcript level"/>
<protein>
    <recommendedName>
        <fullName evidence="5">PTS system glucitol/sorbitol-specific EIIB component</fullName>
        <ecNumber evidence="1">2.7.1.198</ecNumber>
    </recommendedName>
    <alternativeName>
        <fullName evidence="5">EII-Gut</fullName>
    </alternativeName>
    <alternativeName>
        <fullName evidence="5">Enzyme II-Gut</fullName>
    </alternativeName>
    <alternativeName>
        <fullName evidence="5">Glucitol/sorbitol-specific phosphotransferase enzyme IIB component</fullName>
    </alternativeName>
</protein>
<comment type="function">
    <text evidence="7">The phosphoenolpyruvate-dependent sugar phosphotransferase system (sugar PTS), a major carbohydrate active transport system, catalyzes the phosphorylation of incoming sugar substrates concomitantly with their translocation across the cell membrane. The enzyme II complex composed of SrlA, SrlB and SrlE is involved in glucitol/sorbitol transport.</text>
</comment>
<comment type="catalytic activity">
    <reaction evidence="1">
        <text>D-sorbitol(out) + N(pros)-phospho-L-histidyl-[protein] = D-sorbitol 6-phosphate(in) + L-histidyl-[protein]</text>
        <dbReference type="Rhea" id="RHEA:42484"/>
        <dbReference type="Rhea" id="RHEA-COMP:9745"/>
        <dbReference type="Rhea" id="RHEA-COMP:9746"/>
        <dbReference type="ChEBI" id="CHEBI:17924"/>
        <dbReference type="ChEBI" id="CHEBI:29979"/>
        <dbReference type="ChEBI" id="CHEBI:60084"/>
        <dbReference type="ChEBI" id="CHEBI:64837"/>
        <dbReference type="EC" id="2.7.1.198"/>
    </reaction>
</comment>
<comment type="subcellular location">
    <subcellularLocation>
        <location evidence="6">Cell inner membrane</location>
        <topology evidence="2">Multi-pass membrane protein</topology>
    </subcellularLocation>
</comment>
<comment type="induction">
    <text evidence="4">Activated by sorbitol and repressed by glucose.</text>
</comment>
<comment type="domain">
    <text evidence="3">The EIIB domain is phosphorylated by phospho-EIIA on a cysteinyl or histidyl residue, depending on the transported sugar. Then, it transfers the phosphoryl group to the sugar substrate concomitantly with the sugar uptake processed by the EIIC domain.</text>
</comment>
<name>PTHB_ERWAM</name>
<gene>
    <name type="primary">srlE</name>
</gene>
<organism>
    <name type="scientific">Erwinia amylovora</name>
    <name type="common">Fire blight bacteria</name>
    <dbReference type="NCBI Taxonomy" id="552"/>
    <lineage>
        <taxon>Bacteria</taxon>
        <taxon>Pseudomonadati</taxon>
        <taxon>Pseudomonadota</taxon>
        <taxon>Gammaproteobacteria</taxon>
        <taxon>Enterobacterales</taxon>
        <taxon>Erwiniaceae</taxon>
        <taxon>Erwinia</taxon>
    </lineage>
</organism>
<reference key="1">
    <citation type="journal article" date="1997" name="Mol. Gen. Genet.">
        <title>Genetics of sorbitol metabolism in Erwinia amylovora and its influence on bacterial virulence.</title>
        <authorList>
            <person name="Aldridge P."/>
            <person name="Metzger M."/>
            <person name="Geider K."/>
        </authorList>
    </citation>
    <scope>NUCLEOTIDE SEQUENCE [GENOMIC DNA]</scope>
    <scope>FUNCTION</scope>
    <scope>INDUCTION</scope>
    <source>
        <strain>EA7/74</strain>
    </source>
</reference>
<dbReference type="EC" id="2.7.1.198" evidence="1"/>
<dbReference type="EMBL" id="Y14603">
    <property type="protein sequence ID" value="CAA74942.1"/>
    <property type="molecule type" value="Genomic_DNA"/>
</dbReference>
<dbReference type="RefSeq" id="WP_004159990.1">
    <property type="nucleotide sequence ID" value="NZ_RQKG01000018.1"/>
</dbReference>
<dbReference type="OMA" id="HKFIYIT"/>
<dbReference type="GO" id="GO:0005886">
    <property type="term" value="C:plasma membrane"/>
    <property type="evidence" value="ECO:0007669"/>
    <property type="project" value="UniProtKB-SubCell"/>
</dbReference>
<dbReference type="GO" id="GO:0016301">
    <property type="term" value="F:kinase activity"/>
    <property type="evidence" value="ECO:0007669"/>
    <property type="project" value="UniProtKB-KW"/>
</dbReference>
<dbReference type="GO" id="GO:0008982">
    <property type="term" value="F:protein-N(PI)-phosphohistidine-sugar phosphotransferase activity"/>
    <property type="evidence" value="ECO:0007669"/>
    <property type="project" value="InterPro"/>
</dbReference>
<dbReference type="GO" id="GO:0090563">
    <property type="term" value="F:protein-phosphocysteine-sugar phosphotransferase activity"/>
    <property type="evidence" value="ECO:0000250"/>
    <property type="project" value="UniProtKB"/>
</dbReference>
<dbReference type="GO" id="GO:0009401">
    <property type="term" value="P:phosphoenolpyruvate-dependent sugar phosphotransferase system"/>
    <property type="evidence" value="ECO:0000250"/>
    <property type="project" value="UniProtKB"/>
</dbReference>
<dbReference type="InterPro" id="IPR011638">
    <property type="entry name" value="PTS_EIIBC_GUT_C"/>
</dbReference>
<dbReference type="InterPro" id="IPR011618">
    <property type="entry name" value="PTS_EIIBC_GUT_N"/>
</dbReference>
<dbReference type="InterPro" id="IPR004702">
    <property type="entry name" value="PTS_sorb_EIIBC"/>
</dbReference>
<dbReference type="NCBIfam" id="TIGR00825">
    <property type="entry name" value="EIIBC-GUT"/>
    <property type="match status" value="1"/>
</dbReference>
<dbReference type="PANTHER" id="PTHR39427">
    <property type="match status" value="1"/>
</dbReference>
<dbReference type="PANTHER" id="PTHR39427:SF1">
    <property type="entry name" value="PTS SYSTEM GLUCITOL_SORBITOL-SPECIFIC EIIB COMPONENT"/>
    <property type="match status" value="1"/>
</dbReference>
<dbReference type="Pfam" id="PF07663">
    <property type="entry name" value="EIIBC-GUT_C"/>
    <property type="match status" value="1"/>
</dbReference>
<dbReference type="Pfam" id="PF03612">
    <property type="entry name" value="EIIBC-GUT_N"/>
    <property type="match status" value="1"/>
</dbReference>
<dbReference type="PROSITE" id="PS51102">
    <property type="entry name" value="PTS_EIIB_TYPE_5"/>
    <property type="match status" value="1"/>
</dbReference>
<accession>O32522</accession>
<feature type="chain" id="PRO_0000186563" description="PTS system glucitol/sorbitol-specific EIIB component">
    <location>
        <begin position="1"/>
        <end position="333"/>
    </location>
</feature>
<feature type="transmembrane region" description="Helical" evidence="2">
    <location>
        <begin position="191"/>
        <end position="211"/>
    </location>
</feature>
<feature type="transmembrane region" description="Helical" evidence="2">
    <location>
        <begin position="220"/>
        <end position="240"/>
    </location>
</feature>
<feature type="transmembrane region" description="Helical" evidence="2">
    <location>
        <begin position="243"/>
        <end position="263"/>
    </location>
</feature>
<feature type="transmembrane region" description="Helical" evidence="2">
    <location>
        <begin position="271"/>
        <end position="291"/>
    </location>
</feature>
<feature type="transmembrane region" description="Helical" evidence="2">
    <location>
        <begin position="304"/>
        <end position="324"/>
    </location>
</feature>
<feature type="domain" description="PTS EIIB type-5" evidence="3">
    <location>
        <begin position="1"/>
        <end position="192"/>
    </location>
</feature>
<feature type="active site" description="Phosphocysteine intermediate; for EIIB activity" evidence="6">
    <location>
        <position position="72"/>
    </location>
</feature>
<feature type="modified residue" description="Phosphocysteine; by EIIA" evidence="3">
    <location>
        <position position="72"/>
    </location>
</feature>
<evidence type="ECO:0000250" key="1">
    <source>
        <dbReference type="UniProtKB" id="P56580"/>
    </source>
</evidence>
<evidence type="ECO:0000255" key="2"/>
<evidence type="ECO:0000255" key="3">
    <source>
        <dbReference type="PROSITE-ProRule" id="PRU00425"/>
    </source>
</evidence>
<evidence type="ECO:0000269" key="4">
    <source>
    </source>
</evidence>
<evidence type="ECO:0000303" key="5">
    <source>
    </source>
</evidence>
<evidence type="ECO:0000305" key="6"/>
<evidence type="ECO:0000305" key="7">
    <source>
    </source>
</evidence>
<keyword id="KW-0997">Cell inner membrane</keyword>
<keyword id="KW-1003">Cell membrane</keyword>
<keyword id="KW-0418">Kinase</keyword>
<keyword id="KW-0472">Membrane</keyword>
<keyword id="KW-0597">Phosphoprotein</keyword>
<keyword id="KW-0598">Phosphotransferase system</keyword>
<keyword id="KW-0762">Sugar transport</keyword>
<keyword id="KW-0808">Transferase</keyword>
<keyword id="KW-0812">Transmembrane</keyword>
<keyword id="KW-1133">Transmembrane helix</keyword>
<keyword id="KW-0813">Transport</keyword>
<keyword id="KW-0843">Virulence</keyword>